<sequence length="438" mass="49390">MSDGTLFIQDSRTSKQYTISVTSDTITAVDFQKITSPTGKLALYDPGLQNTIIKKTQITGRDPVTGITLFRGLSAKEIWNRHADFEDHFHLLVFGKYPSPEESEALRRRLAVQMTVVPETVIKAVQAFPRTSHPLPMIIAGLAAFISADPSSLPAIRGGNIYHGNRALCDEGVIRATAAYAVVMGLINSHRKQLPYVPADPQKSFYENVFAMMRCPVHHNYLVTFREGMVLNSDNGMTQSSVVLLSTASSLPDPISCLISAITAAYGPLHYGAQEAGSTTLKSIGSLDKVPEFLEQVKRRERRLFGFGHRLHKREDPRLASVKRWLKMMDYTPDQEPLLELAQEIDRLASSDEYFIKRNLRANADFYTHFLFKAWGFDWDMLCAANMFHRIIGLMAHWREAMDQPIKIFRATDLYVGPVVIQEDNRTVLEEPKIQSRL</sequence>
<feature type="chain" id="PRO_0000458947" description="Alkylcitrate synthase tstJ">
    <location>
        <begin position="1"/>
        <end position="438"/>
    </location>
</feature>
<feature type="active site" evidence="1">
    <location>
        <position position="309"/>
    </location>
</feature>
<feature type="active site" evidence="1">
    <location>
        <position position="365"/>
    </location>
</feature>
<keyword id="KW-1185">Reference proteome</keyword>
<keyword id="KW-0808">Transferase</keyword>
<reference key="1">
    <citation type="journal article" date="2015" name="Genome Announc.">
        <title>Genome sequence of the AIDS-associated pathogen Penicillium marneffei (ATCC18224) and its near taxonomic relative Talaromyces stipitatus (ATCC10500).</title>
        <authorList>
            <person name="Nierman W.C."/>
            <person name="Fedorova-Abrams N.D."/>
            <person name="Andrianopoulos A."/>
        </authorList>
    </citation>
    <scope>NUCLEOTIDE SEQUENCE [LARGE SCALE GENOMIC DNA]</scope>
    <source>
        <strain>ATCC 10500 / CBS 375.48 / QM 6759 / NRRL 1006</strain>
    </source>
</reference>
<reference key="2">
    <citation type="journal article" date="1997" name="J. Antibiot.">
        <title>CP-225,917 and CP-263,114, novel Ras farnesylation inhibitors from an unidentified fungus. I. Taxonomy, fermentation, isolation, and biochemical properties.</title>
        <authorList>
            <person name="Dabrah T.T."/>
            <person name="Harwood H.J. Jr."/>
            <person name="Huang L.H."/>
            <person name="Jankovich N.D."/>
            <person name="Kaneko T."/>
            <person name="Li J.C."/>
            <person name="Lindsey S."/>
            <person name="Moshier P.M."/>
            <person name="Subashi T.A."/>
            <person name="Therrien M."/>
            <person name="Watts P.C."/>
        </authorList>
    </citation>
    <scope>BIOTECHNOLOGY</scope>
</reference>
<reference key="3">
    <citation type="journal article" date="2015" name="Org. Lett.">
        <title>Biosynthetic study on antihypercholesterolemic agent phomoidride: general biogenesis of fungal dimeric anhydrides.</title>
        <authorList>
            <person name="Fujii R."/>
            <person name="Matsu Y."/>
            <person name="Minami A."/>
            <person name="Nagamine S."/>
            <person name="Takeuchi I."/>
            <person name="Gomi K."/>
            <person name="Oikawa H."/>
        </authorList>
    </citation>
    <scope>FUNCTION</scope>
    <scope>INDUCTION</scope>
    <scope>CATALYTIC ACTIVITY</scope>
    <scope>PATHWAY</scope>
</reference>
<reference key="4">
    <citation type="journal article" date="2022" name="J. Am. Chem. Soc.">
        <title>Elucidation of late-stage biosynthesis of phomoidride: proposal of cyclization mechanism affording characteristic nine-membered ring of fungal dimeric anhydride.</title>
        <authorList>
            <person name="Yamamoto S."/>
            <person name="Matsuyama T."/>
            <person name="Ozaki T."/>
            <person name="Takino J."/>
            <person name="Sato H."/>
            <person name="Uchiyama M."/>
            <person name="Minami A."/>
            <person name="Oikawa H."/>
        </authorList>
    </citation>
    <scope>FUNCTION</scope>
    <scope>CATALYTIC ACTIVITY</scope>
    <scope>PATHWAY</scope>
</reference>
<gene>
    <name evidence="5" type="primary">tstJ</name>
    <name type="ORF">TSTA_048490</name>
</gene>
<dbReference type="EC" id="2.3.3.-" evidence="2"/>
<dbReference type="EMBL" id="EQ962657">
    <property type="protein sequence ID" value="EED15409.1"/>
    <property type="molecule type" value="Genomic_DNA"/>
</dbReference>
<dbReference type="RefSeq" id="XP_002485362.1">
    <property type="nucleotide sequence ID" value="XM_002485317.1"/>
</dbReference>
<dbReference type="SMR" id="B8MKZ3"/>
<dbReference type="STRING" id="441959.B8MKZ3"/>
<dbReference type="GeneID" id="8107031"/>
<dbReference type="VEuPathDB" id="FungiDB:TSTA_048490"/>
<dbReference type="eggNOG" id="KOG2617">
    <property type="taxonomic scope" value="Eukaryota"/>
</dbReference>
<dbReference type="HOGENOM" id="CLU_025068_0_1_1"/>
<dbReference type="InParanoid" id="B8MKZ3"/>
<dbReference type="OMA" id="QGFMAHW"/>
<dbReference type="OrthoDB" id="435022at2759"/>
<dbReference type="PhylomeDB" id="B8MKZ3"/>
<dbReference type="Proteomes" id="UP000001745">
    <property type="component" value="Unassembled WGS sequence"/>
</dbReference>
<dbReference type="GO" id="GO:0005759">
    <property type="term" value="C:mitochondrial matrix"/>
    <property type="evidence" value="ECO:0007669"/>
    <property type="project" value="TreeGrafter"/>
</dbReference>
<dbReference type="GO" id="GO:0004108">
    <property type="term" value="F:citrate (Si)-synthase activity"/>
    <property type="evidence" value="ECO:0007669"/>
    <property type="project" value="TreeGrafter"/>
</dbReference>
<dbReference type="GO" id="GO:0005975">
    <property type="term" value="P:carbohydrate metabolic process"/>
    <property type="evidence" value="ECO:0007669"/>
    <property type="project" value="TreeGrafter"/>
</dbReference>
<dbReference type="GO" id="GO:0006099">
    <property type="term" value="P:tricarboxylic acid cycle"/>
    <property type="evidence" value="ECO:0007669"/>
    <property type="project" value="TreeGrafter"/>
</dbReference>
<dbReference type="Gene3D" id="1.10.580.10">
    <property type="entry name" value="Citrate Synthase, domain 1"/>
    <property type="match status" value="1"/>
</dbReference>
<dbReference type="Gene3D" id="1.10.230.10">
    <property type="entry name" value="Cytochrome P450-Terp, domain 2"/>
    <property type="match status" value="1"/>
</dbReference>
<dbReference type="InterPro" id="IPR016142">
    <property type="entry name" value="Citrate_synth-like_lrg_a-sub"/>
</dbReference>
<dbReference type="InterPro" id="IPR016143">
    <property type="entry name" value="Citrate_synth-like_sm_a-sub"/>
</dbReference>
<dbReference type="InterPro" id="IPR002020">
    <property type="entry name" value="Citrate_synthase"/>
</dbReference>
<dbReference type="InterPro" id="IPR036969">
    <property type="entry name" value="Citrate_synthase_sf"/>
</dbReference>
<dbReference type="PANTHER" id="PTHR11739">
    <property type="entry name" value="CITRATE SYNTHASE"/>
    <property type="match status" value="1"/>
</dbReference>
<dbReference type="PANTHER" id="PTHR11739:SF4">
    <property type="entry name" value="CITRATE SYNTHASE, PEROXISOMAL"/>
    <property type="match status" value="1"/>
</dbReference>
<dbReference type="Pfam" id="PF00285">
    <property type="entry name" value="Citrate_synt"/>
    <property type="match status" value="1"/>
</dbReference>
<dbReference type="PRINTS" id="PR00143">
    <property type="entry name" value="CITRTSNTHASE"/>
</dbReference>
<dbReference type="SUPFAM" id="SSF48256">
    <property type="entry name" value="Citrate synthase"/>
    <property type="match status" value="1"/>
</dbReference>
<proteinExistence type="evidence at protein level"/>
<organism>
    <name type="scientific">Talaromyces stipitatus (strain ATCC 10500 / CBS 375.48 / QM 6759 / NRRL 1006)</name>
    <name type="common">Penicillium stipitatum</name>
    <dbReference type="NCBI Taxonomy" id="441959"/>
    <lineage>
        <taxon>Eukaryota</taxon>
        <taxon>Fungi</taxon>
        <taxon>Dikarya</taxon>
        <taxon>Ascomycota</taxon>
        <taxon>Pezizomycotina</taxon>
        <taxon>Eurotiomycetes</taxon>
        <taxon>Eurotiomycetidae</taxon>
        <taxon>Eurotiales</taxon>
        <taxon>Trichocomaceae</taxon>
        <taxon>Talaromyces</taxon>
        <taxon>Talaromyces sect. Talaromyces</taxon>
    </lineage>
</organism>
<evidence type="ECO:0000255" key="1">
    <source>
        <dbReference type="PIRSR" id="PIRSR001369-1"/>
    </source>
</evidence>
<evidence type="ECO:0000269" key="2">
    <source>
    </source>
</evidence>
<evidence type="ECO:0000269" key="3">
    <source>
    </source>
</evidence>
<evidence type="ECO:0000269" key="4">
    <source>
    </source>
</evidence>
<evidence type="ECO:0000303" key="5">
    <source>
    </source>
</evidence>
<evidence type="ECO:0000305" key="6"/>
<name>TSTJ_TALSN</name>
<protein>
    <recommendedName>
        <fullName evidence="5">Alkylcitrate synthase tstJ</fullName>
        <shortName evidence="5">ACS</shortName>
        <ecNumber evidence="2">2.3.3.-</ecNumber>
    </recommendedName>
    <alternativeName>
        <fullName evidence="5">Phomoidride biosynthesis cluster protein J</fullName>
    </alternativeName>
</protein>
<comment type="function">
    <text evidence="2 3">Alkylcitrate synthase; part of the gene cluster that mediates the biosynthesis of the antihypercholesterolemic agents phomoidrides which are dimeric anhydrides (PubMed:26558485, PubMed:36374185). Within the pathway, the alkylcitrate synthase (ACS) tstJ and the alkylcitrate dehydratase (ACDH) tstI produce the decarboxylated monomeric anhydrides by coupling the C12-fatty acyl product from phiA with oxalacetic acid (PubMed:26558485, PubMed:36374185). The pathway begins with the highly reducing polyketide synthase tstA that catalyzes the formation of a C12-fatty acyl-ACP, starting from one acetate and 5 malonate units. The hydrolase tstM is involved in the release of the C12-fatty acyl chain from phiA. The alkylcitrate synthase (ACS) tstJ and the alkylcitrate dehydratase (ACDH) tstI then give rise to decarboxylated monomeric anhydrides by coupling the C12-fatty acyl chain with oxalacetic acid. The cyclase tstC is responsible for the dimerization of the monomeric anhydrides which leads to the production of prephomoidride that contains the characteristic bicyclo[4.3.1]deca-1,6-diene system of phomoidrides. Iterative oxidation catalyzed by the alpha-ketoglutarate-dependent dioxygenase tstK produced then phomoidride A. Finally, the methyltransferase tstE converts phomoidride A to phomoidride B via an acetalization reaction. The phosphatidylethanolamine-binding protein tstB and tstN are not essential for dimerization and their functions have still to be determined (PubMed:36374185).</text>
</comment>
<comment type="catalytic activity">
    <reaction evidence="2">
        <text>(2E,10E)-dode-2,10-dicenoyl-CoA + oxaloacetate + H2O = (4E,11E)-2-hydroxytrideca-4,11-dien-1,2,3-tricarboxylate + CoA + H(+)</text>
        <dbReference type="Rhea" id="RHEA:77751"/>
        <dbReference type="ChEBI" id="CHEBI:15377"/>
        <dbReference type="ChEBI" id="CHEBI:15378"/>
        <dbReference type="ChEBI" id="CHEBI:16452"/>
        <dbReference type="ChEBI" id="CHEBI:57287"/>
        <dbReference type="ChEBI" id="CHEBI:197428"/>
        <dbReference type="ChEBI" id="CHEBI:197445"/>
    </reaction>
    <physiologicalReaction direction="left-to-right" evidence="2">
        <dbReference type="Rhea" id="RHEA:77752"/>
    </physiologicalReaction>
</comment>
<comment type="pathway">
    <text evidence="2 3">Secondary metabolite biosynthesis.</text>
</comment>
<comment type="biotechnology">
    <text evidence="4">Phomoidrides A and B (also known as CP-225,917 and CP-263,114) are potent inhibitors of Ras farnesyltransferase and squalene synthase (PubMed:9066758). CP-225,917 and CP-263,114 inhibit Ras farnesyl transferase from rat brain with IC(50) values of 6 uM and 20 uoM, respectively (PubMed:9066758). CP-225,917 inhibits squalene synthase with an IC(50) value of 43 uM and CP-263,114 with an IC(50) of 160 uM (PubMed:9066758).</text>
</comment>
<comment type="similarity">
    <text evidence="6">Belongs to the citrate synthase family.</text>
</comment>
<accession>B8MKZ3</accession>